<dbReference type="EC" id="3.1.-.-"/>
<dbReference type="EMBL" id="AB103508">
    <property type="protein sequence ID" value="BAC57447.1"/>
    <property type="molecule type" value="mRNA"/>
</dbReference>
<dbReference type="EMBL" id="AE014296">
    <property type="protein sequence ID" value="AAF50805.1"/>
    <property type="molecule type" value="Genomic_DNA"/>
</dbReference>
<dbReference type="EMBL" id="AF160893">
    <property type="protein sequence ID" value="AAD46833.1"/>
    <property type="molecule type" value="mRNA"/>
</dbReference>
<dbReference type="EMBL" id="AY128475">
    <property type="protein sequence ID" value="AAM75068.1"/>
    <property type="molecule type" value="mRNA"/>
</dbReference>
<dbReference type="RefSeq" id="NP_647943.2">
    <property type="nucleotide sequence ID" value="NM_139686.3"/>
</dbReference>
<dbReference type="SMR" id="Q9VRJ0"/>
<dbReference type="BioGRID" id="64062">
    <property type="interactions" value="2"/>
</dbReference>
<dbReference type="FunCoup" id="Q9VRJ0">
    <property type="interactions" value="819"/>
</dbReference>
<dbReference type="IntAct" id="Q9VRJ0">
    <property type="interactions" value="4"/>
</dbReference>
<dbReference type="STRING" id="7227.FBpp0076879"/>
<dbReference type="iPTMnet" id="Q9VRJ0"/>
<dbReference type="PaxDb" id="7227-FBpp0076879"/>
<dbReference type="DNASU" id="38594"/>
<dbReference type="EnsemblMetazoa" id="FBtr0077176">
    <property type="protein sequence ID" value="FBpp0076879"/>
    <property type="gene ID" value="FBgn0263831"/>
</dbReference>
<dbReference type="GeneID" id="38594"/>
<dbReference type="KEGG" id="dme:Dmel_CG10670"/>
<dbReference type="AGR" id="FB:FBgn0263831"/>
<dbReference type="CTD" id="38594"/>
<dbReference type="FlyBase" id="FBgn0263831">
    <property type="gene designation" value="Gen"/>
</dbReference>
<dbReference type="VEuPathDB" id="VectorBase:FBgn0263831"/>
<dbReference type="eggNOG" id="KOG2519">
    <property type="taxonomic scope" value="Eukaryota"/>
</dbReference>
<dbReference type="GeneTree" id="ENSGT00940000159266"/>
<dbReference type="HOGENOM" id="CLU_013777_2_0_1"/>
<dbReference type="InParanoid" id="Q9VRJ0"/>
<dbReference type="OMA" id="RNLYFRT"/>
<dbReference type="OrthoDB" id="2959108at2759"/>
<dbReference type="PhylomeDB" id="Q9VRJ0"/>
<dbReference type="SignaLink" id="Q9VRJ0"/>
<dbReference type="BioGRID-ORCS" id="38594">
    <property type="hits" value="0 hits in 1 CRISPR screen"/>
</dbReference>
<dbReference type="GenomeRNAi" id="38594"/>
<dbReference type="PRO" id="PR:Q9VRJ0"/>
<dbReference type="Proteomes" id="UP000000803">
    <property type="component" value="Chromosome 3L"/>
</dbReference>
<dbReference type="Bgee" id="FBgn0263831">
    <property type="expression patterns" value="Expressed in dorsal head epidermis anlage (Drosophila) and 21 other cell types or tissues"/>
</dbReference>
<dbReference type="GO" id="GO:0005737">
    <property type="term" value="C:cytoplasm"/>
    <property type="evidence" value="ECO:0000314"/>
    <property type="project" value="FlyBase"/>
</dbReference>
<dbReference type="GO" id="GO:0005634">
    <property type="term" value="C:nucleus"/>
    <property type="evidence" value="ECO:0000314"/>
    <property type="project" value="UniProtKB"/>
</dbReference>
<dbReference type="GO" id="GO:0035312">
    <property type="term" value="F:5'-3' DNA exonuclease activity"/>
    <property type="evidence" value="ECO:0000314"/>
    <property type="project" value="FlyBase"/>
</dbReference>
<dbReference type="GO" id="GO:0017108">
    <property type="term" value="F:5'-flap endonuclease activity"/>
    <property type="evidence" value="ECO:0000314"/>
    <property type="project" value="FlyBase"/>
</dbReference>
<dbReference type="GO" id="GO:0008821">
    <property type="term" value="F:crossover junction DNA endonuclease activity"/>
    <property type="evidence" value="ECO:0000314"/>
    <property type="project" value="FlyBase"/>
</dbReference>
<dbReference type="GO" id="GO:0004520">
    <property type="term" value="F:DNA endonuclease activity"/>
    <property type="evidence" value="ECO:0000314"/>
    <property type="project" value="FlyBase"/>
</dbReference>
<dbReference type="GO" id="GO:0008311">
    <property type="term" value="F:double-stranded DNA 3'-5' DNA exonuclease activity"/>
    <property type="evidence" value="ECO:0000314"/>
    <property type="project" value="FlyBase"/>
</dbReference>
<dbReference type="GO" id="GO:0000400">
    <property type="term" value="F:four-way junction DNA binding"/>
    <property type="evidence" value="ECO:0000314"/>
    <property type="project" value="FlyBase"/>
</dbReference>
<dbReference type="GO" id="GO:0046872">
    <property type="term" value="F:metal ion binding"/>
    <property type="evidence" value="ECO:0007669"/>
    <property type="project" value="UniProtKB-KW"/>
</dbReference>
<dbReference type="GO" id="GO:0008310">
    <property type="term" value="F:single-stranded DNA 3'-5' DNA exonuclease activity"/>
    <property type="evidence" value="ECO:0000314"/>
    <property type="project" value="FlyBase"/>
</dbReference>
<dbReference type="GO" id="GO:0006281">
    <property type="term" value="P:DNA repair"/>
    <property type="evidence" value="ECO:0000315"/>
    <property type="project" value="FlyBase"/>
</dbReference>
<dbReference type="GO" id="GO:0006302">
    <property type="term" value="P:double-strand break repair"/>
    <property type="evidence" value="ECO:0000315"/>
    <property type="project" value="FlyBase"/>
</dbReference>
<dbReference type="CDD" id="cd09905">
    <property type="entry name" value="H3TH_GEN1"/>
    <property type="match status" value="1"/>
</dbReference>
<dbReference type="CDD" id="cd09869">
    <property type="entry name" value="PIN_GEN1"/>
    <property type="match status" value="1"/>
</dbReference>
<dbReference type="FunFam" id="3.40.50.1010:FF:000054">
    <property type="entry name" value="Flap endonuclease GEN"/>
    <property type="match status" value="1"/>
</dbReference>
<dbReference type="FunFam" id="1.10.150.20:FF:000030">
    <property type="entry name" value="Flap endonuclease GEN-like 1"/>
    <property type="match status" value="1"/>
</dbReference>
<dbReference type="Gene3D" id="1.10.150.20">
    <property type="entry name" value="5' to 3' exonuclease, C-terminal subdomain"/>
    <property type="match status" value="1"/>
</dbReference>
<dbReference type="Gene3D" id="3.40.50.1010">
    <property type="entry name" value="5'-nuclease"/>
    <property type="match status" value="1"/>
</dbReference>
<dbReference type="InterPro" id="IPR036279">
    <property type="entry name" value="5-3_exonuclease_C_sf"/>
</dbReference>
<dbReference type="InterPro" id="IPR041012">
    <property type="entry name" value="GEN_chromo"/>
</dbReference>
<dbReference type="InterPro" id="IPR008918">
    <property type="entry name" value="HhH2"/>
</dbReference>
<dbReference type="InterPro" id="IPR029060">
    <property type="entry name" value="PIN-like_dom_sf"/>
</dbReference>
<dbReference type="InterPro" id="IPR006086">
    <property type="entry name" value="XPG-I_dom"/>
</dbReference>
<dbReference type="InterPro" id="IPR006084">
    <property type="entry name" value="XPG/Rad2"/>
</dbReference>
<dbReference type="InterPro" id="IPR006085">
    <property type="entry name" value="XPG_DNA_repair_N"/>
</dbReference>
<dbReference type="PANTHER" id="PTHR11081">
    <property type="entry name" value="FLAP ENDONUCLEASE FAMILY MEMBER"/>
    <property type="match status" value="1"/>
</dbReference>
<dbReference type="PANTHER" id="PTHR11081:SF70">
    <property type="entry name" value="FLAP ENDONUCLEASE GEN HOMOLOG 1"/>
    <property type="match status" value="1"/>
</dbReference>
<dbReference type="Pfam" id="PF18704">
    <property type="entry name" value="Chromo_2"/>
    <property type="match status" value="1"/>
</dbReference>
<dbReference type="Pfam" id="PF00867">
    <property type="entry name" value="XPG_I"/>
    <property type="match status" value="1"/>
</dbReference>
<dbReference type="Pfam" id="PF00752">
    <property type="entry name" value="XPG_N"/>
    <property type="match status" value="1"/>
</dbReference>
<dbReference type="PRINTS" id="PR00853">
    <property type="entry name" value="XPGRADSUPER"/>
</dbReference>
<dbReference type="SMART" id="SM00279">
    <property type="entry name" value="HhH2"/>
    <property type="match status" value="1"/>
</dbReference>
<dbReference type="SMART" id="SM00484">
    <property type="entry name" value="XPGI"/>
    <property type="match status" value="1"/>
</dbReference>
<dbReference type="SMART" id="SM00485">
    <property type="entry name" value="XPGN"/>
    <property type="match status" value="1"/>
</dbReference>
<dbReference type="SUPFAM" id="SSF47807">
    <property type="entry name" value="5' to 3' exonuclease, C-terminal subdomain"/>
    <property type="match status" value="1"/>
</dbReference>
<dbReference type="SUPFAM" id="SSF88723">
    <property type="entry name" value="PIN domain-like"/>
    <property type="match status" value="1"/>
</dbReference>
<protein>
    <recommendedName>
        <fullName>Flap endonuclease GEN</fullName>
        <ecNumber>3.1.-.-</ecNumber>
    </recommendedName>
    <alternativeName>
        <fullName>Flap structure-specific endonuclease GEN</fullName>
    </alternativeName>
    <alternativeName>
        <fullName>Xpg-like endonuclease</fullName>
        <shortName>DmGEN</shortName>
    </alternativeName>
</protein>
<sequence>MGVKELWGVLTPHCERKPINELRGKKVAIDLAGWVCESLNVVDYFVHPRHHLKNLFFRTCYLIWEQVTPVFVLEGVAPKLKSQVIAKRNELQFRGVKPKNSPECTQSQPSKGDKGRSRFNHVLKQCETLLLSMGIQCVQGPGEAEAYCAFLNKHGLVDGVISQDSDCFAYGAVRVYRNFSVSTQGAQAAAGGAVDIYDMREITSRMDFGQQKIIVMALLCGCDYCPDGIGGIGKDGVLKLFNKYKETEILDRMRSWRGETDKYNALEIRVDDKSICSNCGHIGKTQSHTKSGCSVCRTHKGCDESLWKEQRLSIKSELTLRRKALLSPDFPNEEIIAEFLSEPDTIPNLNLNWRQPNLVKFIKQIGHLLQWPEIYCFQKFFPILTRWQVQQSKQEKILIQPHEIIKKRTVKGVPSLELRWHDPSGIFKGLIPDKQIAEYEAEHPKGIEELYYTIEPLDMLETAYPDLVAAFLKSKEKPAKKTTRKKKTASEEENKENEPNSKPKRVVRKIKAQPEENQPLLHQFLGRKKEGTPVKAPAPQRQQCSTPITKFLPSDLESDCDAEEFDMSDIVKGIISNPNAKPALTNHDGHQLHYEPMAEDLSLRLAQMSLGNVNESPKVETKRDLSQVDQLPQSKRFSLEDSFDLLVKGDLQKLARTPVERFKMQHRISEKIPTPVKPLDNISYFFNQSSDNADVFEELMNSSLVPQDQEDNAEDEEEDDLVVISD</sequence>
<keyword id="KW-0227">DNA damage</keyword>
<keyword id="KW-0234">DNA repair</keyword>
<keyword id="KW-0255">Endonuclease</keyword>
<keyword id="KW-0269">Exonuclease</keyword>
<keyword id="KW-0378">Hydrolase</keyword>
<keyword id="KW-0460">Magnesium</keyword>
<keyword id="KW-0479">Metal-binding</keyword>
<keyword id="KW-0540">Nuclease</keyword>
<keyword id="KW-0539">Nucleus</keyword>
<keyword id="KW-0597">Phosphoprotein</keyword>
<keyword id="KW-1185">Reference proteome</keyword>
<comment type="function">
    <text evidence="3 4">Endonuclease which cleaves flap structures at the junction between single-stranded DNA and double-stranded DNA. Specific for 5'-overhanging flap structures in which the 5'-upstream of the flap is completely double-stranded. Prefers the blocked-flap structures similar to those occurring at replication forks, in which the 5' single-strand overhang of the flap is double-stranded. Also possesses weak 5'- to 3'-exonuclease activity on nicked but not gapped double-stranded DNA. Does not cleave bubble-like or Holliday junction substrates.</text>
</comment>
<comment type="cofactor">
    <cofactor evidence="1">
        <name>Mg(2+)</name>
        <dbReference type="ChEBI" id="CHEBI:18420"/>
    </cofactor>
    <text evidence="1">Binds 2 magnesium ions per subunit. They probably participate in the reaction catalyzed by the enzyme. May bind an additional third magnesium ion after substrate binding.</text>
</comment>
<comment type="biophysicochemical properties">
    <phDependence>
        <text evidence="4">Optimum pH is 8.</text>
    </phDependence>
</comment>
<comment type="subcellular location">
    <subcellularLocation>
        <location evidence="4">Nucleus</location>
    </subcellularLocation>
</comment>
<comment type="developmental stage">
    <text evidence="4">Present in stage 1-4 embryos (at protein level).</text>
</comment>
<comment type="similarity">
    <text evidence="6">Belongs to the XPG/RAD2 endonuclease family. GEN subfamily.</text>
</comment>
<comment type="caution">
    <text evidence="6">3' to 5' exonuclease activity reported in PubMed:15576351 is probably artifactual, due to the presence of other nucleases in the preparation.</text>
</comment>
<evidence type="ECO:0000250" key="1"/>
<evidence type="ECO:0000256" key="2">
    <source>
        <dbReference type="SAM" id="MobiDB-lite"/>
    </source>
</evidence>
<evidence type="ECO:0000269" key="3">
    <source>
    </source>
</evidence>
<evidence type="ECO:0000269" key="4">
    <source>
    </source>
</evidence>
<evidence type="ECO:0000269" key="5">
    <source>
    </source>
</evidence>
<evidence type="ECO:0000305" key="6"/>
<proteinExistence type="evidence at protein level"/>
<gene>
    <name type="primary">Gen</name>
    <name type="ORF">CG10670</name>
</gene>
<organism>
    <name type="scientific">Drosophila melanogaster</name>
    <name type="common">Fruit fly</name>
    <dbReference type="NCBI Taxonomy" id="7227"/>
    <lineage>
        <taxon>Eukaryota</taxon>
        <taxon>Metazoa</taxon>
        <taxon>Ecdysozoa</taxon>
        <taxon>Arthropoda</taxon>
        <taxon>Hexapoda</taxon>
        <taxon>Insecta</taxon>
        <taxon>Pterygota</taxon>
        <taxon>Neoptera</taxon>
        <taxon>Endopterygota</taxon>
        <taxon>Diptera</taxon>
        <taxon>Brachycera</taxon>
        <taxon>Muscomorpha</taxon>
        <taxon>Ephydroidea</taxon>
        <taxon>Drosophilidae</taxon>
        <taxon>Drosophila</taxon>
        <taxon>Sophophora</taxon>
    </lineage>
</organism>
<feature type="chain" id="PRO_0000314148" description="Flap endonuclease GEN">
    <location>
        <begin position="1"/>
        <end position="726"/>
    </location>
</feature>
<feature type="region of interest" description="N-domain">
    <location>
        <begin position="1"/>
        <end position="90"/>
    </location>
</feature>
<feature type="region of interest" description="Disordered" evidence="2">
    <location>
        <begin position="96"/>
        <end position="116"/>
    </location>
</feature>
<feature type="region of interest" description="I-domain">
    <location>
        <begin position="131"/>
        <end position="227"/>
    </location>
</feature>
<feature type="region of interest" description="Disordered" evidence="2">
    <location>
        <begin position="478"/>
        <end position="521"/>
    </location>
</feature>
<feature type="region of interest" description="Disordered" evidence="2">
    <location>
        <begin position="704"/>
        <end position="726"/>
    </location>
</feature>
<feature type="compositionally biased region" description="Basic and acidic residues" evidence="2">
    <location>
        <begin position="488"/>
        <end position="501"/>
    </location>
</feature>
<feature type="compositionally biased region" description="Basic residues" evidence="2">
    <location>
        <begin position="502"/>
        <end position="511"/>
    </location>
</feature>
<feature type="compositionally biased region" description="Acidic residues" evidence="2">
    <location>
        <begin position="708"/>
        <end position="726"/>
    </location>
</feature>
<feature type="binding site" evidence="1">
    <location>
        <position position="30"/>
    </location>
    <ligand>
        <name>Mg(2+)</name>
        <dbReference type="ChEBI" id="CHEBI:18420"/>
        <label>1</label>
    </ligand>
</feature>
<feature type="binding site" evidence="1">
    <location>
        <position position="74"/>
    </location>
    <ligand>
        <name>Mg(2+)</name>
        <dbReference type="ChEBI" id="CHEBI:18420"/>
        <label>1</label>
    </ligand>
</feature>
<feature type="binding site" evidence="1">
    <location>
        <position position="143"/>
    </location>
    <ligand>
        <name>Mg(2+)</name>
        <dbReference type="ChEBI" id="CHEBI:18420"/>
        <label>1</label>
    </ligand>
</feature>
<feature type="binding site" evidence="6">
    <location>
        <position position="145"/>
    </location>
    <ligand>
        <name>Mg(2+)</name>
        <dbReference type="ChEBI" id="CHEBI:18420"/>
        <label>1</label>
    </ligand>
</feature>
<feature type="binding site" evidence="1">
    <location>
        <position position="164"/>
    </location>
    <ligand>
        <name>Mg(2+)</name>
        <dbReference type="ChEBI" id="CHEBI:18420"/>
        <label>2</label>
    </ligand>
</feature>
<feature type="binding site" evidence="1">
    <location>
        <position position="166"/>
    </location>
    <ligand>
        <name>Mg(2+)</name>
        <dbReference type="ChEBI" id="CHEBI:18420"/>
        <label>2</label>
    </ligand>
</feature>
<feature type="binding site" evidence="1">
    <location>
        <position position="223"/>
    </location>
    <ligand>
        <name>Mg(2+)</name>
        <dbReference type="ChEBI" id="CHEBI:18420"/>
        <label>2</label>
    </ligand>
</feature>
<feature type="modified residue" description="Phosphotyrosine" evidence="5">
    <location>
        <position position="439"/>
    </location>
</feature>
<feature type="mutagenesis site" description="Abolishes flap endonuclease activity." evidence="4">
    <original>EAE</original>
    <variation>AAA</variation>
    <location>
        <begin position="143"/>
        <end position="145"/>
    </location>
</feature>
<feature type="sequence conflict" description="In Ref. 1; BAC57447 and 4; AAD46833." evidence="6" ref="1 4">
    <original>H</original>
    <variation>L</variation>
    <location>
        <position position="402"/>
    </location>
</feature>
<feature type="sequence conflict" description="In Ref. 1; BAC57447 and 4; AAD46833." evidence="6" ref="1 4">
    <original>N</original>
    <variation>D</variation>
    <location>
        <position position="614"/>
    </location>
</feature>
<feature type="sequence conflict" description="In Ref. 1; BAC57447 and 4; AAD46833." evidence="6" ref="1 4">
    <original>D</original>
    <variation>A</variation>
    <location>
        <position position="680"/>
    </location>
</feature>
<accession>Q9VRJ0</accession>
<accession>Q9U9Q6</accession>
<reference key="1">
    <citation type="journal article" date="2004" name="Nucleic Acids Res.">
        <title>DmGEN, a novel RAD2 family endo-exonuclease from Drosophila melanogaster.</title>
        <authorList>
            <person name="Ishikawa G."/>
            <person name="Kanai Y."/>
            <person name="Takata K."/>
            <person name="Takeuchi R."/>
            <person name="Shimanouchi K."/>
            <person name="Ruike T."/>
            <person name="Furukawa T."/>
            <person name="Kimura S."/>
            <person name="Sakaguchi K."/>
        </authorList>
    </citation>
    <scope>NUCLEOTIDE SEQUENCE [MRNA]</scope>
    <scope>FUNCTION</scope>
</reference>
<reference key="2">
    <citation type="journal article" date="2000" name="Science">
        <title>The genome sequence of Drosophila melanogaster.</title>
        <authorList>
            <person name="Adams M.D."/>
            <person name="Celniker S.E."/>
            <person name="Holt R.A."/>
            <person name="Evans C.A."/>
            <person name="Gocayne J.D."/>
            <person name="Amanatides P.G."/>
            <person name="Scherer S.E."/>
            <person name="Li P.W."/>
            <person name="Hoskins R.A."/>
            <person name="Galle R.F."/>
            <person name="George R.A."/>
            <person name="Lewis S.E."/>
            <person name="Richards S."/>
            <person name="Ashburner M."/>
            <person name="Henderson S.N."/>
            <person name="Sutton G.G."/>
            <person name="Wortman J.R."/>
            <person name="Yandell M.D."/>
            <person name="Zhang Q."/>
            <person name="Chen L.X."/>
            <person name="Brandon R.C."/>
            <person name="Rogers Y.-H.C."/>
            <person name="Blazej R.G."/>
            <person name="Champe M."/>
            <person name="Pfeiffer B.D."/>
            <person name="Wan K.H."/>
            <person name="Doyle C."/>
            <person name="Baxter E.G."/>
            <person name="Helt G."/>
            <person name="Nelson C.R."/>
            <person name="Miklos G.L.G."/>
            <person name="Abril J.F."/>
            <person name="Agbayani A."/>
            <person name="An H.-J."/>
            <person name="Andrews-Pfannkoch C."/>
            <person name="Baldwin D."/>
            <person name="Ballew R.M."/>
            <person name="Basu A."/>
            <person name="Baxendale J."/>
            <person name="Bayraktaroglu L."/>
            <person name="Beasley E.M."/>
            <person name="Beeson K.Y."/>
            <person name="Benos P.V."/>
            <person name="Berman B.P."/>
            <person name="Bhandari D."/>
            <person name="Bolshakov S."/>
            <person name="Borkova D."/>
            <person name="Botchan M.R."/>
            <person name="Bouck J."/>
            <person name="Brokstein P."/>
            <person name="Brottier P."/>
            <person name="Burtis K.C."/>
            <person name="Busam D.A."/>
            <person name="Butler H."/>
            <person name="Cadieu E."/>
            <person name="Center A."/>
            <person name="Chandra I."/>
            <person name="Cherry J.M."/>
            <person name="Cawley S."/>
            <person name="Dahlke C."/>
            <person name="Davenport L.B."/>
            <person name="Davies P."/>
            <person name="de Pablos B."/>
            <person name="Delcher A."/>
            <person name="Deng Z."/>
            <person name="Mays A.D."/>
            <person name="Dew I."/>
            <person name="Dietz S.M."/>
            <person name="Dodson K."/>
            <person name="Doup L.E."/>
            <person name="Downes M."/>
            <person name="Dugan-Rocha S."/>
            <person name="Dunkov B.C."/>
            <person name="Dunn P."/>
            <person name="Durbin K.J."/>
            <person name="Evangelista C.C."/>
            <person name="Ferraz C."/>
            <person name="Ferriera S."/>
            <person name="Fleischmann W."/>
            <person name="Fosler C."/>
            <person name="Gabrielian A.E."/>
            <person name="Garg N.S."/>
            <person name="Gelbart W.M."/>
            <person name="Glasser K."/>
            <person name="Glodek A."/>
            <person name="Gong F."/>
            <person name="Gorrell J.H."/>
            <person name="Gu Z."/>
            <person name="Guan P."/>
            <person name="Harris M."/>
            <person name="Harris N.L."/>
            <person name="Harvey D.A."/>
            <person name="Heiman T.J."/>
            <person name="Hernandez J.R."/>
            <person name="Houck J."/>
            <person name="Hostin D."/>
            <person name="Houston K.A."/>
            <person name="Howland T.J."/>
            <person name="Wei M.-H."/>
            <person name="Ibegwam C."/>
            <person name="Jalali M."/>
            <person name="Kalush F."/>
            <person name="Karpen G.H."/>
            <person name="Ke Z."/>
            <person name="Kennison J.A."/>
            <person name="Ketchum K.A."/>
            <person name="Kimmel B.E."/>
            <person name="Kodira C.D."/>
            <person name="Kraft C.L."/>
            <person name="Kravitz S."/>
            <person name="Kulp D."/>
            <person name="Lai Z."/>
            <person name="Lasko P."/>
            <person name="Lei Y."/>
            <person name="Levitsky A.A."/>
            <person name="Li J.H."/>
            <person name="Li Z."/>
            <person name="Liang Y."/>
            <person name="Lin X."/>
            <person name="Liu X."/>
            <person name="Mattei B."/>
            <person name="McIntosh T.C."/>
            <person name="McLeod M.P."/>
            <person name="McPherson D."/>
            <person name="Merkulov G."/>
            <person name="Milshina N.V."/>
            <person name="Mobarry C."/>
            <person name="Morris J."/>
            <person name="Moshrefi A."/>
            <person name="Mount S.M."/>
            <person name="Moy M."/>
            <person name="Murphy B."/>
            <person name="Murphy L."/>
            <person name="Muzny D.M."/>
            <person name="Nelson D.L."/>
            <person name="Nelson D.R."/>
            <person name="Nelson K.A."/>
            <person name="Nixon K."/>
            <person name="Nusskern D.R."/>
            <person name="Pacleb J.M."/>
            <person name="Palazzolo M."/>
            <person name="Pittman G.S."/>
            <person name="Pan S."/>
            <person name="Pollard J."/>
            <person name="Puri V."/>
            <person name="Reese M.G."/>
            <person name="Reinert K."/>
            <person name="Remington K."/>
            <person name="Saunders R.D.C."/>
            <person name="Scheeler F."/>
            <person name="Shen H."/>
            <person name="Shue B.C."/>
            <person name="Siden-Kiamos I."/>
            <person name="Simpson M."/>
            <person name="Skupski M.P."/>
            <person name="Smith T.J."/>
            <person name="Spier E."/>
            <person name="Spradling A.C."/>
            <person name="Stapleton M."/>
            <person name="Strong R."/>
            <person name="Sun E."/>
            <person name="Svirskas R."/>
            <person name="Tector C."/>
            <person name="Turner R."/>
            <person name="Venter E."/>
            <person name="Wang A.H."/>
            <person name="Wang X."/>
            <person name="Wang Z.-Y."/>
            <person name="Wassarman D.A."/>
            <person name="Weinstock G.M."/>
            <person name="Weissenbach J."/>
            <person name="Williams S.M."/>
            <person name="Woodage T."/>
            <person name="Worley K.C."/>
            <person name="Wu D."/>
            <person name="Yang S."/>
            <person name="Yao Q.A."/>
            <person name="Ye J."/>
            <person name="Yeh R.-F."/>
            <person name="Zaveri J.S."/>
            <person name="Zhan M."/>
            <person name="Zhang G."/>
            <person name="Zhao Q."/>
            <person name="Zheng L."/>
            <person name="Zheng X.H."/>
            <person name="Zhong F.N."/>
            <person name="Zhong W."/>
            <person name="Zhou X."/>
            <person name="Zhu S.C."/>
            <person name="Zhu X."/>
            <person name="Smith H.O."/>
            <person name="Gibbs R.A."/>
            <person name="Myers E.W."/>
            <person name="Rubin G.M."/>
            <person name="Venter J.C."/>
        </authorList>
    </citation>
    <scope>NUCLEOTIDE SEQUENCE [LARGE SCALE GENOMIC DNA]</scope>
    <source>
        <strain>Berkeley</strain>
    </source>
</reference>
<reference key="3">
    <citation type="journal article" date="2002" name="Genome Biol.">
        <title>Annotation of the Drosophila melanogaster euchromatic genome: a systematic review.</title>
        <authorList>
            <person name="Misra S."/>
            <person name="Crosby M.A."/>
            <person name="Mungall C.J."/>
            <person name="Matthews B.B."/>
            <person name="Campbell K.S."/>
            <person name="Hradecky P."/>
            <person name="Huang Y."/>
            <person name="Kaminker J.S."/>
            <person name="Millburn G.H."/>
            <person name="Prochnik S.E."/>
            <person name="Smith C.D."/>
            <person name="Tupy J.L."/>
            <person name="Whitfield E.J."/>
            <person name="Bayraktaroglu L."/>
            <person name="Berman B.P."/>
            <person name="Bettencourt B.R."/>
            <person name="Celniker S.E."/>
            <person name="de Grey A.D.N.J."/>
            <person name="Drysdale R.A."/>
            <person name="Harris N.L."/>
            <person name="Richter J."/>
            <person name="Russo S."/>
            <person name="Schroeder A.J."/>
            <person name="Shu S.Q."/>
            <person name="Stapleton M."/>
            <person name="Yamada C."/>
            <person name="Ashburner M."/>
            <person name="Gelbart W.M."/>
            <person name="Rubin G.M."/>
            <person name="Lewis S.E."/>
        </authorList>
    </citation>
    <scope>GENOME REANNOTATION</scope>
    <source>
        <strain>Berkeley</strain>
    </source>
</reference>
<reference key="4">
    <citation type="journal article" date="2002" name="Genome Biol.">
        <title>A Drosophila full-length cDNA resource.</title>
        <authorList>
            <person name="Stapleton M."/>
            <person name="Carlson J.W."/>
            <person name="Brokstein P."/>
            <person name="Yu C."/>
            <person name="Champe M."/>
            <person name="George R.A."/>
            <person name="Guarin H."/>
            <person name="Kronmiller B."/>
            <person name="Pacleb J.M."/>
            <person name="Park S."/>
            <person name="Wan K.H."/>
            <person name="Rubin G.M."/>
            <person name="Celniker S.E."/>
        </authorList>
    </citation>
    <scope>NUCLEOTIDE SEQUENCE [LARGE SCALE MRNA]</scope>
    <source>
        <strain>Berkeley</strain>
        <tissue>Embryo</tissue>
        <tissue>Ovary</tissue>
    </source>
</reference>
<reference key="5">
    <citation type="journal article" date="2007" name="FEBS J.">
        <title>DmGEN shows a flap endonuclease activity, cleaving the blocked-flap structure and model replication fork.</title>
        <authorList>
            <person name="Kanai Y."/>
            <person name="Ishikawa G."/>
            <person name="Takeuchi R."/>
            <person name="Ruike T."/>
            <person name="Nakamura R."/>
            <person name="Ihara A."/>
            <person name="Ohashi T."/>
            <person name="Takata K."/>
            <person name="Kimura S."/>
            <person name="Sakaguchi K."/>
        </authorList>
    </citation>
    <scope>FUNCTION</scope>
    <scope>BIOPHYSICOCHEMICAL PROPERTIES</scope>
    <scope>COFACTOR</scope>
    <scope>MUTAGENESIS OF 143-E--E-145</scope>
    <scope>DEVELOPMENTAL STAGE</scope>
    <scope>SUBCELLULAR LOCATION</scope>
</reference>
<reference key="6">
    <citation type="journal article" date="2008" name="J. Proteome Res.">
        <title>Phosphoproteome analysis of Drosophila melanogaster embryos.</title>
        <authorList>
            <person name="Zhai B."/>
            <person name="Villen J."/>
            <person name="Beausoleil S.A."/>
            <person name="Mintseris J."/>
            <person name="Gygi S.P."/>
        </authorList>
    </citation>
    <scope>PHOSPHORYLATION [LARGE SCALE ANALYSIS] AT TYR-439</scope>
    <scope>IDENTIFICATION BY MASS SPECTROMETRY</scope>
    <source>
        <tissue>Embryo</tissue>
    </source>
</reference>
<name>GEN_DROME</name>